<reference key="1">
    <citation type="journal article" date="2015" name="Proc. Natl. Acad. Sci. U.S.A.">
        <title>Trichodesmium genome maintains abundant, widespread noncoding DNA in situ, despite oligotrophic lifestyle.</title>
        <authorList>
            <person name="Walworth N."/>
            <person name="Pfreundt U."/>
            <person name="Nelson W.C."/>
            <person name="Mincer T."/>
            <person name="Heidelberg J.F."/>
            <person name="Fu F."/>
            <person name="Waterbury J.B."/>
            <person name="Glavina del Rio T."/>
            <person name="Goodwin L."/>
            <person name="Kyrpides N.C."/>
            <person name="Land M.L."/>
            <person name="Woyke T."/>
            <person name="Hutchins D.A."/>
            <person name="Hess W.R."/>
            <person name="Webb E.A."/>
        </authorList>
    </citation>
    <scope>NUCLEOTIDE SEQUENCE [LARGE SCALE GENOMIC DNA]</scope>
    <source>
        <strain>IMS101</strain>
    </source>
</reference>
<keyword id="KW-0963">Cytoplasm</keyword>
<keyword id="KW-0489">Methyltransferase</keyword>
<keyword id="KW-0949">S-adenosyl-L-methionine</keyword>
<keyword id="KW-0808">Transferase</keyword>
<comment type="function">
    <text evidence="1">Methylates ribosomal protein L11.</text>
</comment>
<comment type="catalytic activity">
    <reaction evidence="1">
        <text>L-lysyl-[protein] + 3 S-adenosyl-L-methionine = N(6),N(6),N(6)-trimethyl-L-lysyl-[protein] + 3 S-adenosyl-L-homocysteine + 3 H(+)</text>
        <dbReference type="Rhea" id="RHEA:54192"/>
        <dbReference type="Rhea" id="RHEA-COMP:9752"/>
        <dbReference type="Rhea" id="RHEA-COMP:13826"/>
        <dbReference type="ChEBI" id="CHEBI:15378"/>
        <dbReference type="ChEBI" id="CHEBI:29969"/>
        <dbReference type="ChEBI" id="CHEBI:57856"/>
        <dbReference type="ChEBI" id="CHEBI:59789"/>
        <dbReference type="ChEBI" id="CHEBI:61961"/>
    </reaction>
</comment>
<comment type="subcellular location">
    <subcellularLocation>
        <location evidence="1">Cytoplasm</location>
    </subcellularLocation>
</comment>
<comment type="similarity">
    <text evidence="1">Belongs to the methyltransferase superfamily. PrmA family.</text>
</comment>
<evidence type="ECO:0000255" key="1">
    <source>
        <dbReference type="HAMAP-Rule" id="MF_00735"/>
    </source>
</evidence>
<dbReference type="EC" id="2.1.1.-" evidence="1"/>
<dbReference type="EMBL" id="CP000393">
    <property type="protein sequence ID" value="ABG53199.1"/>
    <property type="molecule type" value="Genomic_DNA"/>
</dbReference>
<dbReference type="RefSeq" id="WP_011613529.1">
    <property type="nucleotide sequence ID" value="NC_008312.1"/>
</dbReference>
<dbReference type="SMR" id="Q10X25"/>
<dbReference type="STRING" id="203124.Tery_4195"/>
<dbReference type="KEGG" id="ter:Tery_4195"/>
<dbReference type="eggNOG" id="COG2264">
    <property type="taxonomic scope" value="Bacteria"/>
</dbReference>
<dbReference type="HOGENOM" id="CLU_049382_0_1_3"/>
<dbReference type="OrthoDB" id="9785995at2"/>
<dbReference type="GO" id="GO:0005737">
    <property type="term" value="C:cytoplasm"/>
    <property type="evidence" value="ECO:0007669"/>
    <property type="project" value="UniProtKB-SubCell"/>
</dbReference>
<dbReference type="GO" id="GO:0016279">
    <property type="term" value="F:protein-lysine N-methyltransferase activity"/>
    <property type="evidence" value="ECO:0007669"/>
    <property type="project" value="RHEA"/>
</dbReference>
<dbReference type="GO" id="GO:0032259">
    <property type="term" value="P:methylation"/>
    <property type="evidence" value="ECO:0007669"/>
    <property type="project" value="UniProtKB-KW"/>
</dbReference>
<dbReference type="CDD" id="cd02440">
    <property type="entry name" value="AdoMet_MTases"/>
    <property type="match status" value="1"/>
</dbReference>
<dbReference type="Gene3D" id="3.40.50.150">
    <property type="entry name" value="Vaccinia Virus protein VP39"/>
    <property type="match status" value="1"/>
</dbReference>
<dbReference type="HAMAP" id="MF_00735">
    <property type="entry name" value="Methyltr_PrmA"/>
    <property type="match status" value="1"/>
</dbReference>
<dbReference type="InterPro" id="IPR050078">
    <property type="entry name" value="Ribosomal_L11_MeTrfase_PrmA"/>
</dbReference>
<dbReference type="InterPro" id="IPR004498">
    <property type="entry name" value="Ribosomal_PrmA_MeTrfase"/>
</dbReference>
<dbReference type="InterPro" id="IPR029063">
    <property type="entry name" value="SAM-dependent_MTases_sf"/>
</dbReference>
<dbReference type="NCBIfam" id="TIGR00406">
    <property type="entry name" value="prmA"/>
    <property type="match status" value="1"/>
</dbReference>
<dbReference type="PANTHER" id="PTHR43648">
    <property type="entry name" value="ELECTRON TRANSFER FLAVOPROTEIN BETA SUBUNIT LYSINE METHYLTRANSFERASE"/>
    <property type="match status" value="1"/>
</dbReference>
<dbReference type="PANTHER" id="PTHR43648:SF1">
    <property type="entry name" value="ELECTRON TRANSFER FLAVOPROTEIN BETA SUBUNIT LYSINE METHYLTRANSFERASE"/>
    <property type="match status" value="1"/>
</dbReference>
<dbReference type="Pfam" id="PF06325">
    <property type="entry name" value="PrmA"/>
    <property type="match status" value="1"/>
</dbReference>
<dbReference type="PIRSF" id="PIRSF000401">
    <property type="entry name" value="RPL11_MTase"/>
    <property type="match status" value="1"/>
</dbReference>
<dbReference type="SUPFAM" id="SSF53335">
    <property type="entry name" value="S-adenosyl-L-methionine-dependent methyltransferases"/>
    <property type="match status" value="1"/>
</dbReference>
<name>PRMA_TRIEI</name>
<feature type="chain" id="PRO_1000132842" description="Ribosomal protein L11 methyltransferase">
    <location>
        <begin position="1"/>
        <end position="297"/>
    </location>
</feature>
<feature type="binding site" evidence="1">
    <location>
        <position position="139"/>
    </location>
    <ligand>
        <name>S-adenosyl-L-methionine</name>
        <dbReference type="ChEBI" id="CHEBI:59789"/>
    </ligand>
</feature>
<feature type="binding site" evidence="1">
    <location>
        <position position="164"/>
    </location>
    <ligand>
        <name>S-adenosyl-L-methionine</name>
        <dbReference type="ChEBI" id="CHEBI:59789"/>
    </ligand>
</feature>
<feature type="binding site" evidence="1">
    <location>
        <position position="186"/>
    </location>
    <ligand>
        <name>S-adenosyl-L-methionine</name>
        <dbReference type="ChEBI" id="CHEBI:59789"/>
    </ligand>
</feature>
<feature type="binding site" evidence="1">
    <location>
        <position position="233"/>
    </location>
    <ligand>
        <name>S-adenosyl-L-methionine</name>
        <dbReference type="ChEBI" id="CHEBI:59789"/>
    </ligand>
</feature>
<protein>
    <recommendedName>
        <fullName evidence="1">Ribosomal protein L11 methyltransferase</fullName>
        <shortName evidence="1">L11 Mtase</shortName>
        <ecNumber evidence="1">2.1.1.-</ecNumber>
    </recommendedName>
</protein>
<organism>
    <name type="scientific">Trichodesmium erythraeum (strain IMS101)</name>
    <dbReference type="NCBI Taxonomy" id="203124"/>
    <lineage>
        <taxon>Bacteria</taxon>
        <taxon>Bacillati</taxon>
        <taxon>Cyanobacteriota</taxon>
        <taxon>Cyanophyceae</taxon>
        <taxon>Oscillatoriophycideae</taxon>
        <taxon>Oscillatoriales</taxon>
        <taxon>Microcoleaceae</taxon>
        <taxon>Trichodesmium</taxon>
    </lineage>
</organism>
<accession>Q10X25</accession>
<proteinExistence type="inferred from homology"/>
<sequence length="297" mass="33400">MAYNWWVIRVLCNKSLEEVIFWRLDSFGCRGTASQIQGKNCLVLAYLPEEQTQLLDLSALSLNFRQDALCMNFPVPIMDWYLIEEEDWASSWKQYWQPQEIGDHFLIHPAWLDLPEQSDKIILRLDPGAAFGTGTHPTTQLCLESLEMRLGLEPHPEAIIADIGCGSGILSIGAALLGVHQIYAVDIDPLAIRSTINNGKLNQIKAEKLIVEQGDIKKLIKLCPKPVDGIVCNILAEVIIDIIPHLTAIAKPKTWGIISGILLEQAKLIGDTLEQNGWVVATLWKKEEWCCFNIRYS</sequence>
<gene>
    <name evidence="1" type="primary">prmA</name>
    <name type="ordered locus">Tery_4195</name>
</gene>